<dbReference type="EMBL" id="AC104473">
    <property type="protein sequence ID" value="AAN60990.1"/>
    <property type="status" value="ALT_SEQ"/>
    <property type="molecule type" value="Genomic_DNA"/>
</dbReference>
<dbReference type="EMBL" id="DP000009">
    <property type="protein sequence ID" value="ABF94752.1"/>
    <property type="status" value="ALT_INIT"/>
    <property type="molecule type" value="Genomic_DNA"/>
</dbReference>
<dbReference type="EMBL" id="AP008209">
    <property type="protein sequence ID" value="BAF11357.1"/>
    <property type="status" value="ALT_INIT"/>
    <property type="molecule type" value="Genomic_DNA"/>
</dbReference>
<dbReference type="EMBL" id="AP014959">
    <property type="status" value="NOT_ANNOTATED_CDS"/>
    <property type="molecule type" value="Genomic_DNA"/>
</dbReference>
<dbReference type="EMBL" id="AK068454">
    <property type="status" value="NOT_ANNOTATED_CDS"/>
    <property type="molecule type" value="mRNA"/>
</dbReference>
<dbReference type="RefSeq" id="XP_015631919.1">
    <property type="nucleotide sequence ID" value="XM_015776433.1"/>
</dbReference>
<dbReference type="SMR" id="Q8H852"/>
<dbReference type="BioGRID" id="801166">
    <property type="interactions" value="1"/>
</dbReference>
<dbReference type="FunCoup" id="Q8H852">
    <property type="interactions" value="3690"/>
</dbReference>
<dbReference type="STRING" id="39947.Q8H852"/>
<dbReference type="PaxDb" id="39947-Q8H852"/>
<dbReference type="KEGG" id="dosa:Os03g0227000"/>
<dbReference type="eggNOG" id="KOG1078">
    <property type="taxonomic scope" value="Eukaryota"/>
</dbReference>
<dbReference type="InParanoid" id="Q8H852"/>
<dbReference type="OrthoDB" id="1074925at2759"/>
<dbReference type="Proteomes" id="UP000000763">
    <property type="component" value="Chromosome 3"/>
</dbReference>
<dbReference type="Proteomes" id="UP000059680">
    <property type="component" value="Chromosome 3"/>
</dbReference>
<dbReference type="GO" id="GO:0030126">
    <property type="term" value="C:COPI vesicle coat"/>
    <property type="evidence" value="ECO:0000318"/>
    <property type="project" value="GO_Central"/>
</dbReference>
<dbReference type="GO" id="GO:0005783">
    <property type="term" value="C:endoplasmic reticulum"/>
    <property type="evidence" value="ECO:0000318"/>
    <property type="project" value="GO_Central"/>
</dbReference>
<dbReference type="GO" id="GO:0005793">
    <property type="term" value="C:endoplasmic reticulum-Golgi intermediate compartment"/>
    <property type="evidence" value="ECO:0000318"/>
    <property type="project" value="GO_Central"/>
</dbReference>
<dbReference type="GO" id="GO:0000139">
    <property type="term" value="C:Golgi membrane"/>
    <property type="evidence" value="ECO:0000318"/>
    <property type="project" value="GO_Central"/>
</dbReference>
<dbReference type="GO" id="GO:0005198">
    <property type="term" value="F:structural molecule activity"/>
    <property type="evidence" value="ECO:0007669"/>
    <property type="project" value="InterPro"/>
</dbReference>
<dbReference type="GO" id="GO:0006888">
    <property type="term" value="P:endoplasmic reticulum to Golgi vesicle-mediated transport"/>
    <property type="evidence" value="ECO:0000318"/>
    <property type="project" value="GO_Central"/>
</dbReference>
<dbReference type="GO" id="GO:0006891">
    <property type="term" value="P:intra-Golgi vesicle-mediated transport"/>
    <property type="evidence" value="ECO:0000318"/>
    <property type="project" value="GO_Central"/>
</dbReference>
<dbReference type="GO" id="GO:0006886">
    <property type="term" value="P:intracellular protein transport"/>
    <property type="evidence" value="ECO:0007669"/>
    <property type="project" value="InterPro"/>
</dbReference>
<dbReference type="GO" id="GO:0009306">
    <property type="term" value="P:protein secretion"/>
    <property type="evidence" value="ECO:0000318"/>
    <property type="project" value="GO_Central"/>
</dbReference>
<dbReference type="FunFam" id="1.25.10.10:FF:000071">
    <property type="entry name" value="Coatomer subunit gamma"/>
    <property type="match status" value="1"/>
</dbReference>
<dbReference type="FunFam" id="1.25.10.10:FF:000078">
    <property type="entry name" value="Coatomer subunit gamma"/>
    <property type="match status" value="1"/>
</dbReference>
<dbReference type="FunFam" id="2.60.40.1480:FF:000002">
    <property type="entry name" value="Coatomer subunit gamma"/>
    <property type="match status" value="1"/>
</dbReference>
<dbReference type="FunFam" id="3.30.310.10:FF:000011">
    <property type="entry name" value="Coatomer subunit gamma"/>
    <property type="match status" value="1"/>
</dbReference>
<dbReference type="Gene3D" id="2.60.40.1480">
    <property type="entry name" value="Coatomer, gamma subunit, appendage domain"/>
    <property type="match status" value="1"/>
</dbReference>
<dbReference type="Gene3D" id="1.25.10.10">
    <property type="entry name" value="Leucine-rich Repeat Variant"/>
    <property type="match status" value="1"/>
</dbReference>
<dbReference type="Gene3D" id="3.30.310.10">
    <property type="entry name" value="TATA-Binding Protein"/>
    <property type="match status" value="1"/>
</dbReference>
<dbReference type="InterPro" id="IPR011989">
    <property type="entry name" value="ARM-like"/>
</dbReference>
<dbReference type="InterPro" id="IPR016024">
    <property type="entry name" value="ARM-type_fold"/>
</dbReference>
<dbReference type="InterPro" id="IPR002553">
    <property type="entry name" value="Clathrin/coatomer_adapt-like_N"/>
</dbReference>
<dbReference type="InterPro" id="IPR013041">
    <property type="entry name" value="Clathrin_app_Ig-like_sf"/>
</dbReference>
<dbReference type="InterPro" id="IPR009028">
    <property type="entry name" value="Coatomer/calthrin_app_sub_C"/>
</dbReference>
<dbReference type="InterPro" id="IPR032154">
    <property type="entry name" value="Coatomer_g_Cpla"/>
</dbReference>
<dbReference type="InterPro" id="IPR017106">
    <property type="entry name" value="Coatomer_gsu"/>
</dbReference>
<dbReference type="InterPro" id="IPR013040">
    <property type="entry name" value="Coatomer_gsu_app_Ig-like_dom"/>
</dbReference>
<dbReference type="InterPro" id="IPR037067">
    <property type="entry name" value="Coatomer_gsu_app_sf"/>
</dbReference>
<dbReference type="InterPro" id="IPR012295">
    <property type="entry name" value="TBP_dom_sf"/>
</dbReference>
<dbReference type="PANTHER" id="PTHR10261">
    <property type="entry name" value="COATOMER SUBUNIT GAMMA"/>
    <property type="match status" value="1"/>
</dbReference>
<dbReference type="PANTHER" id="PTHR10261:SF5">
    <property type="entry name" value="COATOMER SUBUNIT GAMMA-1"/>
    <property type="match status" value="1"/>
</dbReference>
<dbReference type="Pfam" id="PF01602">
    <property type="entry name" value="Adaptin_N"/>
    <property type="match status" value="1"/>
</dbReference>
<dbReference type="Pfam" id="PF16381">
    <property type="entry name" value="Coatomer_g_Cpla"/>
    <property type="match status" value="1"/>
</dbReference>
<dbReference type="Pfam" id="PF08752">
    <property type="entry name" value="COP-gamma_platf"/>
    <property type="match status" value="1"/>
</dbReference>
<dbReference type="PIRSF" id="PIRSF037093">
    <property type="entry name" value="Coatomer_gamma_subunit"/>
    <property type="match status" value="1"/>
</dbReference>
<dbReference type="SUPFAM" id="SSF48371">
    <property type="entry name" value="ARM repeat"/>
    <property type="match status" value="1"/>
</dbReference>
<dbReference type="SUPFAM" id="SSF49348">
    <property type="entry name" value="Clathrin adaptor appendage domain"/>
    <property type="match status" value="1"/>
</dbReference>
<dbReference type="SUPFAM" id="SSF55711">
    <property type="entry name" value="Subdomain of clathrin and coatomer appendage domain"/>
    <property type="match status" value="1"/>
</dbReference>
<name>COPG1_ORYSJ</name>
<keyword id="KW-0963">Cytoplasm</keyword>
<keyword id="KW-0968">Cytoplasmic vesicle</keyword>
<keyword id="KW-0931">ER-Golgi transport</keyword>
<keyword id="KW-0333">Golgi apparatus</keyword>
<keyword id="KW-0472">Membrane</keyword>
<keyword id="KW-0653">Protein transport</keyword>
<keyword id="KW-1185">Reference proteome</keyword>
<keyword id="KW-0677">Repeat</keyword>
<keyword id="KW-0813">Transport</keyword>
<gene>
    <name type="ordered locus">Os03g0227000</name>
    <name type="ordered locus">LOC_Os03g12590</name>
    <name type="ORF">OJ1626B05.5</name>
</gene>
<comment type="function">
    <text evidence="1">The coatomer is a cytosolic protein complex that binds to dilysine motifs and reversibly associates with Golgi non-clathrin-coated vesicles, which further mediate biosynthetic protein transport from the ER, via the Golgi up to the trans Golgi network. Coatomer complex is required for budding from Golgi membranes, and is essential for the retrograde Golgi-to-ER transport of dilysine-tagged proteins (By similarity).</text>
</comment>
<comment type="subunit">
    <text evidence="1">Oligomeric complex that consists of at least the alpha, beta, beta', gamma, delta, epsilon and zeta subunits.</text>
</comment>
<comment type="subcellular location">
    <subcellularLocation>
        <location evidence="1">Cytoplasm</location>
    </subcellularLocation>
    <subcellularLocation>
        <location evidence="1">Golgi apparatus membrane</location>
        <topology evidence="1">Peripheral membrane protein</topology>
        <orientation evidence="1">Cytoplasmic side</orientation>
    </subcellularLocation>
    <subcellularLocation>
        <location evidence="1">Cytoplasmic vesicle</location>
        <location evidence="1">COPI-coated vesicle membrane</location>
        <topology evidence="1">Peripheral membrane protein</topology>
        <orientation evidence="1">Cytoplasmic side</orientation>
    </subcellularLocation>
    <text evidence="1">The coatomer is cytoplasmic or polymerized on the cytoplasmic side of the Golgi, as well as on the vesicles/buds originating from it.</text>
</comment>
<comment type="similarity">
    <text evidence="3">Belongs to the COPG family.</text>
</comment>
<comment type="sequence caution" evidence="3">
    <conflict type="erroneous gene model prediction">
        <sequence resource="EMBL-CDS" id="AAN60990"/>
    </conflict>
</comment>
<comment type="sequence caution" evidence="3">
    <conflict type="erroneous initiation">
        <sequence resource="EMBL-CDS" id="ABF94752"/>
    </conflict>
</comment>
<comment type="sequence caution" evidence="3">
    <conflict type="erroneous initiation">
        <sequence resource="EMBL-CDS" id="BAF11357"/>
    </conflict>
</comment>
<accession>Q8H852</accession>
<accession>Q10PP1</accession>
<reference key="1">
    <citation type="journal article" date="2005" name="Genome Res.">
        <title>Sequence, annotation, and analysis of synteny between rice chromosome 3 and diverged grass species.</title>
        <authorList>
            <consortium name="The rice chromosome 3 sequencing consortium"/>
            <person name="Buell C.R."/>
            <person name="Yuan Q."/>
            <person name="Ouyang S."/>
            <person name="Liu J."/>
            <person name="Zhu W."/>
            <person name="Wang A."/>
            <person name="Maiti R."/>
            <person name="Haas B."/>
            <person name="Wortman J."/>
            <person name="Pertea M."/>
            <person name="Jones K.M."/>
            <person name="Kim M."/>
            <person name="Overton L."/>
            <person name="Tsitrin T."/>
            <person name="Fadrosh D."/>
            <person name="Bera J."/>
            <person name="Weaver B."/>
            <person name="Jin S."/>
            <person name="Johri S."/>
            <person name="Reardon M."/>
            <person name="Webb K."/>
            <person name="Hill J."/>
            <person name="Moffat K."/>
            <person name="Tallon L."/>
            <person name="Van Aken S."/>
            <person name="Lewis M."/>
            <person name="Utterback T."/>
            <person name="Feldblyum T."/>
            <person name="Zismann V."/>
            <person name="Iobst S."/>
            <person name="Hsiao J."/>
            <person name="de Vazeille A.R."/>
            <person name="Salzberg S.L."/>
            <person name="White O."/>
            <person name="Fraser C.M."/>
            <person name="Yu Y."/>
            <person name="Kim H."/>
            <person name="Rambo T."/>
            <person name="Currie J."/>
            <person name="Collura K."/>
            <person name="Kernodle-Thompson S."/>
            <person name="Wei F."/>
            <person name="Kudrna K."/>
            <person name="Ammiraju J.S.S."/>
            <person name="Luo M."/>
            <person name="Goicoechea J.L."/>
            <person name="Wing R.A."/>
            <person name="Henry D."/>
            <person name="Oates R."/>
            <person name="Palmer M."/>
            <person name="Pries G."/>
            <person name="Saski C."/>
            <person name="Simmons J."/>
            <person name="Soderlund C."/>
            <person name="Nelson W."/>
            <person name="de la Bastide M."/>
            <person name="Spiegel L."/>
            <person name="Nascimento L."/>
            <person name="Huang E."/>
            <person name="Preston R."/>
            <person name="Zutavern T."/>
            <person name="Palmer L."/>
            <person name="O'Shaughnessy A."/>
            <person name="Dike S."/>
            <person name="McCombie W.R."/>
            <person name="Minx P."/>
            <person name="Cordum H."/>
            <person name="Wilson R."/>
            <person name="Jin W."/>
            <person name="Lee H.R."/>
            <person name="Jiang J."/>
            <person name="Jackson S."/>
        </authorList>
    </citation>
    <scope>NUCLEOTIDE SEQUENCE [LARGE SCALE GENOMIC DNA]</scope>
    <source>
        <strain>cv. Nipponbare</strain>
    </source>
</reference>
<reference key="2">
    <citation type="journal article" date="2005" name="Nature">
        <title>The map-based sequence of the rice genome.</title>
        <authorList>
            <consortium name="International rice genome sequencing project (IRGSP)"/>
        </authorList>
    </citation>
    <scope>NUCLEOTIDE SEQUENCE [LARGE SCALE GENOMIC DNA]</scope>
    <source>
        <strain>cv. Nipponbare</strain>
    </source>
</reference>
<reference key="3">
    <citation type="journal article" date="2008" name="Nucleic Acids Res.">
        <title>The rice annotation project database (RAP-DB): 2008 update.</title>
        <authorList>
            <consortium name="The rice annotation project (RAP)"/>
        </authorList>
    </citation>
    <scope>GENOME REANNOTATION</scope>
    <source>
        <strain>cv. Nipponbare</strain>
    </source>
</reference>
<reference key="4">
    <citation type="journal article" date="2013" name="Rice">
        <title>Improvement of the Oryza sativa Nipponbare reference genome using next generation sequence and optical map data.</title>
        <authorList>
            <person name="Kawahara Y."/>
            <person name="de la Bastide M."/>
            <person name="Hamilton J.P."/>
            <person name="Kanamori H."/>
            <person name="McCombie W.R."/>
            <person name="Ouyang S."/>
            <person name="Schwartz D.C."/>
            <person name="Tanaka T."/>
            <person name="Wu J."/>
            <person name="Zhou S."/>
            <person name="Childs K.L."/>
            <person name="Davidson R.M."/>
            <person name="Lin H."/>
            <person name="Quesada-Ocampo L."/>
            <person name="Vaillancourt B."/>
            <person name="Sakai H."/>
            <person name="Lee S.S."/>
            <person name="Kim J."/>
            <person name="Numa H."/>
            <person name="Itoh T."/>
            <person name="Buell C.R."/>
            <person name="Matsumoto T."/>
        </authorList>
    </citation>
    <scope>GENOME REANNOTATION</scope>
    <source>
        <strain>cv. Nipponbare</strain>
    </source>
</reference>
<reference key="5">
    <citation type="journal article" date="2003" name="Science">
        <title>Collection, mapping, and annotation of over 28,000 cDNA clones from japonica rice.</title>
        <authorList>
            <consortium name="The rice full-length cDNA consortium"/>
        </authorList>
    </citation>
    <scope>NUCLEOTIDE SEQUENCE [LARGE SCALE MRNA]</scope>
    <source>
        <strain>cv. Nipponbare</strain>
    </source>
</reference>
<evidence type="ECO:0000250" key="1"/>
<evidence type="ECO:0000256" key="2">
    <source>
        <dbReference type="SAM" id="MobiDB-lite"/>
    </source>
</evidence>
<evidence type="ECO:0000305" key="3"/>
<proteinExistence type="evidence at transcript level"/>
<organism>
    <name type="scientific">Oryza sativa subsp. japonica</name>
    <name type="common">Rice</name>
    <dbReference type="NCBI Taxonomy" id="39947"/>
    <lineage>
        <taxon>Eukaryota</taxon>
        <taxon>Viridiplantae</taxon>
        <taxon>Streptophyta</taxon>
        <taxon>Embryophyta</taxon>
        <taxon>Tracheophyta</taxon>
        <taxon>Spermatophyta</taxon>
        <taxon>Magnoliopsida</taxon>
        <taxon>Liliopsida</taxon>
        <taxon>Poales</taxon>
        <taxon>Poaceae</taxon>
        <taxon>BOP clade</taxon>
        <taxon>Oryzoideae</taxon>
        <taxon>Oryzeae</taxon>
        <taxon>Oryzinae</taxon>
        <taxon>Oryza</taxon>
        <taxon>Oryza sativa</taxon>
    </lineage>
</organism>
<protein>
    <recommendedName>
        <fullName>Coatomer subunit gamma-1</fullName>
    </recommendedName>
    <alternativeName>
        <fullName>Gamma-1-coat protein</fullName>
        <shortName>Gamma-1-COP</shortName>
    </alternativeName>
</protein>
<feature type="chain" id="PRO_0000285628" description="Coatomer subunit gamma-1">
    <location>
        <begin position="1"/>
        <end position="884"/>
    </location>
</feature>
<feature type="repeat" description="HEAT 1">
    <location>
        <begin position="65"/>
        <end position="100"/>
    </location>
</feature>
<feature type="repeat" description="HEAT 2">
    <location>
        <begin position="101"/>
        <end position="138"/>
    </location>
</feature>
<feature type="repeat" description="HEAT 3">
    <location>
        <begin position="286"/>
        <end position="323"/>
    </location>
</feature>
<feature type="repeat" description="HEAT 4">
    <location>
        <begin position="325"/>
        <end position="357"/>
    </location>
</feature>
<feature type="repeat" description="HEAT 5">
    <location>
        <begin position="358"/>
        <end position="395"/>
    </location>
</feature>
<feature type="region of interest" description="Disordered" evidence="2">
    <location>
        <begin position="592"/>
        <end position="612"/>
    </location>
</feature>
<feature type="compositionally biased region" description="Pro residues" evidence="2">
    <location>
        <begin position="602"/>
        <end position="612"/>
    </location>
</feature>
<sequence length="884" mass="98606">MAQPYMKKDDDDEDVEYSPFYGIEKGAVLQEARAFHDPQLDARKCSQVITKLLYLLNQGETFTKVEATEVFFAVTKLFQSKDAGLRRLVYLMIKELSPSSDEVIIVTSSLMKDMNSKTDMYRANAIRVLCRIIDGTLLTQIERYLKQAIVDKNPVVASAALVSGIHLLQANPEIVKRWSNEVQEAVQSRFALVQFHGLALLHQIRQNDRLAISKMVSGLTRGSVRSPLAQCLLIRYTSQVIRESSMNTQTSDRPFFDYLESCLRHKSEMVILEAARKIAEMDVTSRELAPAITVLQLFLSSSKPVLRFAAVRTLNKVAMTRPLAVTNCNVDLESLMSDQNRSIATLAITTLLKTGNESSVDRLMKQITNFMSDIADEFKIVVVEAIRSLCLKFPLKYRSMMNFLSNSLREEGGFEYKKAIVDSIVTLISEIPDAKEIGLLYLCEFIEDCEFTYLSSQILHLLGNEGPRTSDPSRYIRYIYNRVILENATVRASAVSTLAKFGALVDALKPRIFVLLRRCLFDTDDEVRDRATLYLQTLDGEVAVGSTEKDVKEFLFGSFDVPLANLEASLKTYEPSEEPFDISLVSREVKSQPLQEKKAPGKKPPAGAPAPAPVPAVDAYQKILSSIPEFSGFGRLFKSSEPVELTEAETEYAINVVKHIYSSHVVLQYNCTNTIPEQLLENVTVYVDATDAEEFSEVCSKPLRSLPYDSPGQIFVAFEKPEHVPATGKFSNVLKFIVKEVDTSTGEVDEDGVEDEYQIEDLEIVSADYMLRVAVSNFRNAWENMDPESERVDEYGLGVRESLAEAVSAVISILGMQPCEGTEVVPKNARSHTCLLSGVFIGDAKVLVRLSFGLSGPKEVAMKLAVRSDDPEVSDKIHEIVASG</sequence>